<protein>
    <recommendedName>
        <fullName evidence="1">Phosphatidylglycerol--prolipoprotein diacylglyceryl transferase</fullName>
        <ecNumber evidence="1">2.5.1.145</ecNumber>
    </recommendedName>
</protein>
<comment type="function">
    <text evidence="1">Catalyzes the transfer of the diacylglyceryl group from phosphatidylglycerol to the sulfhydryl group of the N-terminal cysteine of a prolipoprotein, the first step in the formation of mature lipoproteins.</text>
</comment>
<comment type="catalytic activity">
    <reaction evidence="1">
        <text>L-cysteinyl-[prolipoprotein] + a 1,2-diacyl-sn-glycero-3-phospho-(1'-sn-glycerol) = an S-1,2-diacyl-sn-glyceryl-L-cysteinyl-[prolipoprotein] + sn-glycerol 1-phosphate + H(+)</text>
        <dbReference type="Rhea" id="RHEA:56712"/>
        <dbReference type="Rhea" id="RHEA-COMP:14679"/>
        <dbReference type="Rhea" id="RHEA-COMP:14680"/>
        <dbReference type="ChEBI" id="CHEBI:15378"/>
        <dbReference type="ChEBI" id="CHEBI:29950"/>
        <dbReference type="ChEBI" id="CHEBI:57685"/>
        <dbReference type="ChEBI" id="CHEBI:64716"/>
        <dbReference type="ChEBI" id="CHEBI:140658"/>
        <dbReference type="EC" id="2.5.1.145"/>
    </reaction>
</comment>
<comment type="pathway">
    <text evidence="1">Protein modification; lipoprotein biosynthesis (diacylglyceryl transfer).</text>
</comment>
<comment type="subcellular location">
    <subcellularLocation>
        <location evidence="1">Cell membrane</location>
        <topology evidence="1">Multi-pass membrane protein</topology>
    </subcellularLocation>
</comment>
<comment type="similarity">
    <text evidence="1 2">Belongs to the Lgt family.</text>
</comment>
<organism>
    <name type="scientific">Staphylococcus epidermidis (strain ATCC 12228 / FDA PCI 1200)</name>
    <dbReference type="NCBI Taxonomy" id="176280"/>
    <lineage>
        <taxon>Bacteria</taxon>
        <taxon>Bacillati</taxon>
        <taxon>Bacillota</taxon>
        <taxon>Bacilli</taxon>
        <taxon>Bacillales</taxon>
        <taxon>Staphylococcaceae</taxon>
        <taxon>Staphylococcus</taxon>
    </lineage>
</organism>
<feature type="chain" id="PRO_0000172679" description="Phosphatidylglycerol--prolipoprotein diacylglyceryl transferase">
    <location>
        <begin position="1"/>
        <end position="279"/>
    </location>
</feature>
<feature type="transmembrane region" description="Helical" evidence="1">
    <location>
        <begin position="22"/>
        <end position="42"/>
    </location>
</feature>
<feature type="transmembrane region" description="Helical" evidence="1">
    <location>
        <begin position="52"/>
        <end position="72"/>
    </location>
</feature>
<feature type="transmembrane region" description="Helical" evidence="1">
    <location>
        <begin position="89"/>
        <end position="109"/>
    </location>
</feature>
<feature type="transmembrane region" description="Helical" evidence="1">
    <location>
        <begin position="203"/>
        <end position="223"/>
    </location>
</feature>
<feature type="transmembrane region" description="Helical" evidence="1">
    <location>
        <begin position="235"/>
        <end position="255"/>
    </location>
</feature>
<feature type="binding site" evidence="1">
    <location>
        <position position="137"/>
    </location>
    <ligand>
        <name>a 1,2-diacyl-sn-glycero-3-phospho-(1'-sn-glycerol)</name>
        <dbReference type="ChEBI" id="CHEBI:64716"/>
    </ligand>
</feature>
<proteinExistence type="inferred from homology"/>
<reference key="1">
    <citation type="journal article" date="2003" name="Mol. Microbiol.">
        <title>Genome-based analysis of virulence genes in a non-biofilm-forming Staphylococcus epidermidis strain (ATCC 12228).</title>
        <authorList>
            <person name="Zhang Y.-Q."/>
            <person name="Ren S.-X."/>
            <person name="Li H.-L."/>
            <person name="Wang Y.-X."/>
            <person name="Fu G."/>
            <person name="Yang J."/>
            <person name="Qin Z.-Q."/>
            <person name="Miao Y.-G."/>
            <person name="Wang W.-Y."/>
            <person name="Chen R.-S."/>
            <person name="Shen Y."/>
            <person name="Chen Z."/>
            <person name="Yuan Z.-H."/>
            <person name="Zhao G.-P."/>
            <person name="Qu D."/>
            <person name="Danchin A."/>
            <person name="Wen Y.-M."/>
        </authorList>
    </citation>
    <scope>NUCLEOTIDE SEQUENCE [LARGE SCALE GENOMIC DNA]</scope>
    <source>
        <strain>ATCC 12228 / FDA PCI 1200</strain>
    </source>
</reference>
<keyword id="KW-1003">Cell membrane</keyword>
<keyword id="KW-0472">Membrane</keyword>
<keyword id="KW-0808">Transferase</keyword>
<keyword id="KW-0812">Transmembrane</keyword>
<keyword id="KW-1133">Transmembrane helix</keyword>
<gene>
    <name evidence="1" type="primary">lgt</name>
    <name type="ordered locus">SE_0544</name>
</gene>
<evidence type="ECO:0000255" key="1">
    <source>
        <dbReference type="HAMAP-Rule" id="MF_01147"/>
    </source>
</evidence>
<evidence type="ECO:0000305" key="2"/>
<sequence>MNITLGYIDPVAFSLGPIQVRWYGIIIACGILLGYFIAQAALKQVGLHKDTLIDIIFYSAIVGFIVARIYFVTFQWPYYMNHLSEIPKIWHGGIAIHGGLIGGLISGIIVCKIKNLHPFQIGDIVAPSIILAQGIGRWGNFMNHEAHGGPVSRAFLEHLHLPDFIIRNMYIEGQYYHPTFLYESIWDVIGFVILITLRKRLKLGETFFGYLIWYSVGRFFVEAMRTDSLMLTSHIRVAQLVSVVLILISVIFVIYRRVKYQPIKYENSGPLTWPIKKAK</sequence>
<name>LGT_STAES</name>
<accession>Q8CTE6</accession>
<dbReference type="EC" id="2.5.1.145" evidence="1"/>
<dbReference type="EMBL" id="AE015929">
    <property type="protein sequence ID" value="AAO04141.1"/>
    <property type="molecule type" value="Genomic_DNA"/>
</dbReference>
<dbReference type="RefSeq" id="NP_764099.1">
    <property type="nucleotide sequence ID" value="NC_004461.1"/>
</dbReference>
<dbReference type="RefSeq" id="WP_002468680.1">
    <property type="nucleotide sequence ID" value="NZ_WBME01000030.1"/>
</dbReference>
<dbReference type="SMR" id="Q8CTE6"/>
<dbReference type="KEGG" id="sep:SE_0544"/>
<dbReference type="PATRIC" id="fig|176280.10.peg.515"/>
<dbReference type="eggNOG" id="COG0682">
    <property type="taxonomic scope" value="Bacteria"/>
</dbReference>
<dbReference type="HOGENOM" id="CLU_013386_0_1_9"/>
<dbReference type="OrthoDB" id="871140at2"/>
<dbReference type="UniPathway" id="UPA00664"/>
<dbReference type="Proteomes" id="UP000001411">
    <property type="component" value="Chromosome"/>
</dbReference>
<dbReference type="GO" id="GO:0005886">
    <property type="term" value="C:plasma membrane"/>
    <property type="evidence" value="ECO:0007669"/>
    <property type="project" value="UniProtKB-SubCell"/>
</dbReference>
<dbReference type="GO" id="GO:0008961">
    <property type="term" value="F:phosphatidylglycerol-prolipoprotein diacylglyceryl transferase activity"/>
    <property type="evidence" value="ECO:0007669"/>
    <property type="project" value="UniProtKB-UniRule"/>
</dbReference>
<dbReference type="GO" id="GO:0042158">
    <property type="term" value="P:lipoprotein biosynthetic process"/>
    <property type="evidence" value="ECO:0007669"/>
    <property type="project" value="UniProtKB-UniRule"/>
</dbReference>
<dbReference type="HAMAP" id="MF_01147">
    <property type="entry name" value="Lgt"/>
    <property type="match status" value="1"/>
</dbReference>
<dbReference type="InterPro" id="IPR001640">
    <property type="entry name" value="Lgt"/>
</dbReference>
<dbReference type="NCBIfam" id="TIGR00544">
    <property type="entry name" value="lgt"/>
    <property type="match status" value="1"/>
</dbReference>
<dbReference type="PANTHER" id="PTHR30589:SF0">
    <property type="entry name" value="PHOSPHATIDYLGLYCEROL--PROLIPOPROTEIN DIACYLGLYCERYL TRANSFERASE"/>
    <property type="match status" value="1"/>
</dbReference>
<dbReference type="PANTHER" id="PTHR30589">
    <property type="entry name" value="PROLIPOPROTEIN DIACYLGLYCERYL TRANSFERASE"/>
    <property type="match status" value="1"/>
</dbReference>
<dbReference type="Pfam" id="PF01790">
    <property type="entry name" value="LGT"/>
    <property type="match status" value="1"/>
</dbReference>
<dbReference type="PROSITE" id="PS01311">
    <property type="entry name" value="LGT"/>
    <property type="match status" value="1"/>
</dbReference>